<comment type="function">
    <text evidence="1 3">Dermonecrotic toxins cleave the phosphodiester linkage between the phosphate and headgroup of certain phospholipids (sphingolipid and lysolipid substrates), forming an alcohol (often choline) and a cyclic phosphate (By similarity). This toxin acts on sphingomyelin (SM) (By similarity). It may also act on ceramide phosphoethanolamine (CPE), lysophosphatidylcholine (LPC) and lysophosphatidylethanolamine (LPE), but not on lysophosphatidylserine (LPS), and lysophosphatidylglycerol (LPG) (By similarity). It acts by transphosphatidylation, releasing exclusively cyclic phosphate products as second products (By similarity). Induces dermonecrosis, hemolysis, increased vascular permeability, edema, inflammatory response, and platelet aggregation (By similarity).</text>
</comment>
<comment type="catalytic activity">
    <reaction evidence="1">
        <text>an N-(acyl)-sphingosylphosphocholine = an N-(acyl)-sphingosyl-1,3-cyclic phosphate + choline</text>
        <dbReference type="Rhea" id="RHEA:60652"/>
        <dbReference type="ChEBI" id="CHEBI:15354"/>
        <dbReference type="ChEBI" id="CHEBI:64583"/>
        <dbReference type="ChEBI" id="CHEBI:143892"/>
    </reaction>
</comment>
<comment type="catalytic activity">
    <reaction evidence="1">
        <text>an N-(acyl)-sphingosylphosphoethanolamine = an N-(acyl)-sphingosyl-1,3-cyclic phosphate + ethanolamine</text>
        <dbReference type="Rhea" id="RHEA:60648"/>
        <dbReference type="ChEBI" id="CHEBI:57603"/>
        <dbReference type="ChEBI" id="CHEBI:143891"/>
        <dbReference type="ChEBI" id="CHEBI:143892"/>
    </reaction>
</comment>
<comment type="catalytic activity">
    <reaction evidence="1">
        <text>a 1-acyl-sn-glycero-3-phosphocholine = a 1-acyl-sn-glycero-2,3-cyclic phosphate + choline</text>
        <dbReference type="Rhea" id="RHEA:60700"/>
        <dbReference type="ChEBI" id="CHEBI:15354"/>
        <dbReference type="ChEBI" id="CHEBI:58168"/>
        <dbReference type="ChEBI" id="CHEBI:143947"/>
    </reaction>
</comment>
<comment type="catalytic activity">
    <reaction evidence="1">
        <text>a 1-acyl-sn-glycero-3-phosphoethanolamine = a 1-acyl-sn-glycero-2,3-cyclic phosphate + ethanolamine</text>
        <dbReference type="Rhea" id="RHEA:60704"/>
        <dbReference type="ChEBI" id="CHEBI:57603"/>
        <dbReference type="ChEBI" id="CHEBI:64381"/>
        <dbReference type="ChEBI" id="CHEBI:143947"/>
    </reaction>
</comment>
<comment type="cofactor">
    <cofactor evidence="5">
        <name>Mg(2+)</name>
        <dbReference type="ChEBI" id="CHEBI:18420"/>
    </cofactor>
    <text evidence="5">Binds 1 Mg(2+) ion per subunit.</text>
</comment>
<comment type="subcellular location">
    <subcellularLocation>
        <location evidence="8">Secreted</location>
    </subcellularLocation>
</comment>
<comment type="tissue specificity">
    <text evidence="8">Expressed by the venom gland.</text>
</comment>
<comment type="similarity">
    <text evidence="7">Belongs to the arthropod phospholipase D family. Class II subfamily.</text>
</comment>
<comment type="caution">
    <text evidence="1 2 4">The most common activity assay for dermonecrotic toxins detects enzymatic activity by monitoring choline release from substrate. Liberation of choline from sphingomyelin (SM) or lysophosphatidylcholine (LPC) is commonly assumed to result from substrate hydrolysis, giving either ceramide-1-phosphate (C1P) or lysophosphatidic acid (LPA), respectively, as a second product. However, two studies from Lajoie and colleagues (2013 and 2015) report the observation of exclusive formation of cyclic phosphate products as second products, resulting from intramolecular transphosphatidylation. Cyclic phosphates have vastly different biological properties from their monoester counterparts, and they may be relevant to the pathology of brown spider envenomation.</text>
</comment>
<reference key="1">
    <citation type="journal article" date="2009" name="Mol. Biol. Evol.">
        <title>Molecular evolution, functional variation, and proposed nomenclature of the gene family that includes sphingomyelinase D in sicariid spider venoms.</title>
        <authorList>
            <person name="Binford G.J."/>
            <person name="Bodner M.R."/>
            <person name="Cordes M.H."/>
            <person name="Baldwin K.L."/>
            <person name="Rynerson M.R."/>
            <person name="Burns S.N."/>
            <person name="Zobel-Thropp P.A."/>
        </authorList>
    </citation>
    <scope>NUCLEOTIDE SEQUENCE [MRNA]</scope>
    <scope>NOMENCLATURE</scope>
    <source>
        <tissue>Venom gland</tissue>
    </source>
</reference>
<keyword id="KW-0204">Cytolysis</keyword>
<keyword id="KW-1061">Dermonecrotic toxin</keyword>
<keyword id="KW-1015">Disulfide bond</keyword>
<keyword id="KW-0354">Hemolysis</keyword>
<keyword id="KW-0442">Lipid degradation</keyword>
<keyword id="KW-0443">Lipid metabolism</keyword>
<keyword id="KW-0456">Lyase</keyword>
<keyword id="KW-0460">Magnesium</keyword>
<keyword id="KW-0479">Metal-binding</keyword>
<keyword id="KW-0964">Secreted</keyword>
<keyword id="KW-0800">Toxin</keyword>
<proteinExistence type="evidence at transcript level"/>
<sequence>WIMGHMVNDLSLVDEFLNDGANSLELDVEFSSSGTAQRTHHGFPCDCFRYCTNSEKFSTYLDYIRQLTTPGNSKFQSRLILLVMDLKLNPLSSSAAYNAGADVALNLLNHYWQRGESEARAYIVLSLSTIGGAEFISGFKSTMEKEGFADKYYDKIGWDFSGNEDLQQIRDVLENYGIREHIWQGDGITNCLPRGDSRLKEALNLRYSPSYIYADKVYTWSIDEENSIKHALWLGVDGVMTNHPERVIEVLGKSKYSDKFRLATYDDNPWEK</sequence>
<feature type="chain" id="PRO_0000392848" description="Dermonecrotic toxin SpeSicTox-betaIB1a">
    <location>
        <begin position="1" status="less than"/>
        <end position="272"/>
    </location>
</feature>
<feature type="active site" evidence="5">
    <location>
        <position position="5"/>
    </location>
</feature>
<feature type="active site" description="Nucleophile" evidence="5">
    <location>
        <position position="41"/>
    </location>
</feature>
<feature type="binding site" evidence="5">
    <location>
        <position position="25"/>
    </location>
    <ligand>
        <name>Mg(2+)</name>
        <dbReference type="ChEBI" id="CHEBI:18420"/>
    </ligand>
</feature>
<feature type="binding site" evidence="5">
    <location>
        <position position="27"/>
    </location>
    <ligand>
        <name>Mg(2+)</name>
        <dbReference type="ChEBI" id="CHEBI:18420"/>
    </ligand>
</feature>
<feature type="binding site" evidence="5">
    <location>
        <position position="85"/>
    </location>
    <ligand>
        <name>Mg(2+)</name>
        <dbReference type="ChEBI" id="CHEBI:18420"/>
    </ligand>
</feature>
<feature type="disulfide bond" evidence="3">
    <location>
        <begin position="45"/>
        <end position="51"/>
    </location>
</feature>
<feature type="disulfide bond" evidence="3">
    <location>
        <begin position="47"/>
        <end position="191"/>
    </location>
</feature>
<feature type="non-terminal residue">
    <location>
        <position position="1"/>
    </location>
</feature>
<evidence type="ECO:0000250" key="1">
    <source>
        <dbReference type="UniProtKB" id="A0A0D4WTV1"/>
    </source>
</evidence>
<evidence type="ECO:0000250" key="2">
    <source>
        <dbReference type="UniProtKB" id="A0A0D4WV12"/>
    </source>
</evidence>
<evidence type="ECO:0000250" key="3">
    <source>
        <dbReference type="UniProtKB" id="P0CE80"/>
    </source>
</evidence>
<evidence type="ECO:0000250" key="4">
    <source>
        <dbReference type="UniProtKB" id="Q4ZFU2"/>
    </source>
</evidence>
<evidence type="ECO:0000250" key="5">
    <source>
        <dbReference type="UniProtKB" id="Q8I914"/>
    </source>
</evidence>
<evidence type="ECO:0000303" key="6">
    <source>
    </source>
</evidence>
<evidence type="ECO:0000305" key="7"/>
<evidence type="ECO:0000305" key="8">
    <source>
    </source>
</evidence>
<organism>
    <name type="scientific">Sicarius peruensis</name>
    <name type="common">Six-eyed sand spider</name>
    <dbReference type="NCBI Taxonomy" id="571541"/>
    <lineage>
        <taxon>Eukaryota</taxon>
        <taxon>Metazoa</taxon>
        <taxon>Ecdysozoa</taxon>
        <taxon>Arthropoda</taxon>
        <taxon>Chelicerata</taxon>
        <taxon>Arachnida</taxon>
        <taxon>Araneae</taxon>
        <taxon>Araneomorphae</taxon>
        <taxon>Haplogynae</taxon>
        <taxon>Scytodoidea</taxon>
        <taxon>Sicariidae</taxon>
        <taxon>Sicarius</taxon>
    </lineage>
</organism>
<protein>
    <recommendedName>
        <fullName evidence="6">Dermonecrotic toxin SpeSicTox-betaIB1a</fullName>
        <ecNumber evidence="4">4.6.1.-</ecNumber>
    </recommendedName>
    <alternativeName>
        <fullName>Phospholipase D</fullName>
        <shortName>PLD</shortName>
    </alternativeName>
    <alternativeName>
        <fullName>Sphingomyelin phosphodiesterase D</fullName>
        <shortName>SMD</shortName>
        <shortName>SMase D</shortName>
        <shortName>Sphingomyelinase D</shortName>
    </alternativeName>
</protein>
<dbReference type="EC" id="4.6.1.-" evidence="4"/>
<dbReference type="EMBL" id="FJ171470">
    <property type="protein sequence ID" value="ACN48966.1"/>
    <property type="molecule type" value="mRNA"/>
</dbReference>
<dbReference type="SMR" id="C0JB35"/>
<dbReference type="GO" id="GO:0005576">
    <property type="term" value="C:extracellular region"/>
    <property type="evidence" value="ECO:0007669"/>
    <property type="project" value="UniProtKB-SubCell"/>
</dbReference>
<dbReference type="GO" id="GO:0016829">
    <property type="term" value="F:lyase activity"/>
    <property type="evidence" value="ECO:0007669"/>
    <property type="project" value="UniProtKB-KW"/>
</dbReference>
<dbReference type="GO" id="GO:0046872">
    <property type="term" value="F:metal ion binding"/>
    <property type="evidence" value="ECO:0007669"/>
    <property type="project" value="UniProtKB-KW"/>
</dbReference>
<dbReference type="GO" id="GO:0008081">
    <property type="term" value="F:phosphoric diester hydrolase activity"/>
    <property type="evidence" value="ECO:0007669"/>
    <property type="project" value="InterPro"/>
</dbReference>
<dbReference type="GO" id="GO:0090729">
    <property type="term" value="F:toxin activity"/>
    <property type="evidence" value="ECO:0007669"/>
    <property type="project" value="UniProtKB-KW"/>
</dbReference>
<dbReference type="GO" id="GO:0031640">
    <property type="term" value="P:killing of cells of another organism"/>
    <property type="evidence" value="ECO:0007669"/>
    <property type="project" value="UniProtKB-KW"/>
</dbReference>
<dbReference type="GO" id="GO:0016042">
    <property type="term" value="P:lipid catabolic process"/>
    <property type="evidence" value="ECO:0007669"/>
    <property type="project" value="UniProtKB-KW"/>
</dbReference>
<dbReference type="CDD" id="cd08576">
    <property type="entry name" value="GDPD_like_SMaseD_PLD"/>
    <property type="match status" value="1"/>
</dbReference>
<dbReference type="Gene3D" id="3.20.20.190">
    <property type="entry name" value="Phosphatidylinositol (PI) phosphodiesterase"/>
    <property type="match status" value="1"/>
</dbReference>
<dbReference type="InterPro" id="IPR017946">
    <property type="entry name" value="PLC-like_Pdiesterase_TIM-brl"/>
</dbReference>
<dbReference type="Pfam" id="PF13653">
    <property type="entry name" value="GDPD_2"/>
    <property type="match status" value="1"/>
</dbReference>
<dbReference type="SUPFAM" id="SSF51695">
    <property type="entry name" value="PLC-like phosphodiesterases"/>
    <property type="match status" value="1"/>
</dbReference>
<name>B1KA_SICPE</name>
<accession>C0JB35</accession>